<proteinExistence type="evidence at transcript level"/>
<name>MB211_BOVIN</name>
<comment type="function">
    <text evidence="1 2">Putative nucleotidyltransferase required for several aspects of embryonic development including normal development of the eye (By similarity). It is unclear whether it displays nucleotidyltransferase activity in vivo. Binds single-stranded RNA (ssRNA) (By similarity).</text>
</comment>
<comment type="subunit">
    <text evidence="2">Monomer. Homodecamer; composed of 2 back to back homopentamers. The protein may exist as monomer in solution and oiligomerizes upon ligand binding.</text>
</comment>
<comment type="subcellular location">
    <subcellularLocation>
        <location evidence="1">Nucleus</location>
    </subcellularLocation>
</comment>
<comment type="similarity">
    <text evidence="4">Belongs to the mab-21 family.</text>
</comment>
<protein>
    <recommendedName>
        <fullName>Putative nucleotidyltransferase MAB21L1</fullName>
        <ecNumber evidence="4">2.7.7.-</ecNumber>
    </recommendedName>
    <alternativeName>
        <fullName>Protein mab-21-like 1</fullName>
    </alternativeName>
</protein>
<reference key="1">
    <citation type="submission" date="2006-09" db="EMBL/GenBank/DDBJ databases">
        <authorList>
            <consortium name="NIH - Mammalian Gene Collection (MGC) project"/>
        </authorList>
    </citation>
    <scope>NUCLEOTIDE SEQUENCE [LARGE SCALE MRNA]</scope>
    <source>
        <strain>Hereford</strain>
        <tissue>Fetal cerebellum</tissue>
    </source>
</reference>
<feature type="chain" id="PRO_0000312780" description="Putative nucleotidyltransferase MAB21L1">
    <location>
        <begin position="1"/>
        <end position="359"/>
    </location>
</feature>
<feature type="binding site" evidence="2">
    <location>
        <begin position="23"/>
        <end position="24"/>
    </location>
    <ligand>
        <name>a ribonucleoside 5'-triphosphate</name>
        <dbReference type="ChEBI" id="CHEBI:61557"/>
    </ligand>
</feature>
<feature type="binding site" evidence="2">
    <location>
        <begin position="63"/>
        <end position="66"/>
    </location>
    <ligand>
        <name>a ribonucleoside 5'-triphosphate</name>
        <dbReference type="ChEBI" id="CHEBI:61557"/>
    </ligand>
</feature>
<feature type="binding site" evidence="3">
    <location>
        <position position="73"/>
    </location>
    <ligand>
        <name>Mg(2+)</name>
        <dbReference type="ChEBI" id="CHEBI:18420"/>
        <note>catalytic</note>
    </ligand>
</feature>
<feature type="binding site" evidence="3">
    <location>
        <position position="75"/>
    </location>
    <ligand>
        <name>Mg(2+)</name>
        <dbReference type="ChEBI" id="CHEBI:18420"/>
        <note>catalytic</note>
    </ligand>
</feature>
<feature type="binding site" evidence="2">
    <location>
        <position position="248"/>
    </location>
    <ligand>
        <name>a ribonucleoside 5'-triphosphate</name>
        <dbReference type="ChEBI" id="CHEBI:61557"/>
    </ligand>
</feature>
<feature type="binding site" evidence="2">
    <location>
        <begin position="252"/>
        <end position="255"/>
    </location>
    <ligand>
        <name>a ribonucleoside 5'-triphosphate</name>
        <dbReference type="ChEBI" id="CHEBI:61557"/>
    </ligand>
</feature>
<organism>
    <name type="scientific">Bos taurus</name>
    <name type="common">Bovine</name>
    <dbReference type="NCBI Taxonomy" id="9913"/>
    <lineage>
        <taxon>Eukaryota</taxon>
        <taxon>Metazoa</taxon>
        <taxon>Chordata</taxon>
        <taxon>Craniata</taxon>
        <taxon>Vertebrata</taxon>
        <taxon>Euteleostomi</taxon>
        <taxon>Mammalia</taxon>
        <taxon>Eutheria</taxon>
        <taxon>Laurasiatheria</taxon>
        <taxon>Artiodactyla</taxon>
        <taxon>Ruminantia</taxon>
        <taxon>Pecora</taxon>
        <taxon>Bovidae</taxon>
        <taxon>Bovinae</taxon>
        <taxon>Bos</taxon>
    </lineage>
</organism>
<accession>A4FV14</accession>
<evidence type="ECO:0000250" key="1">
    <source>
        <dbReference type="UniProtKB" id="O70299"/>
    </source>
</evidence>
<evidence type="ECO:0000250" key="2">
    <source>
        <dbReference type="UniProtKB" id="Q13394"/>
    </source>
</evidence>
<evidence type="ECO:0000250" key="3">
    <source>
        <dbReference type="UniProtKB" id="Q8N884"/>
    </source>
</evidence>
<evidence type="ECO:0000305" key="4"/>
<dbReference type="EC" id="2.7.7.-" evidence="4"/>
<dbReference type="EMBL" id="BC123603">
    <property type="protein sequence ID" value="AAI23604.1"/>
    <property type="molecule type" value="mRNA"/>
</dbReference>
<dbReference type="RefSeq" id="NP_001091579.1">
    <property type="nucleotide sequence ID" value="NM_001098110.2"/>
</dbReference>
<dbReference type="SMR" id="A4FV14"/>
<dbReference type="FunCoup" id="A4FV14">
    <property type="interactions" value="159"/>
</dbReference>
<dbReference type="STRING" id="9913.ENSBTAP00000016355"/>
<dbReference type="PaxDb" id="9913-ENSBTAP00000016355"/>
<dbReference type="Ensembl" id="ENSBTAT00000016355.5">
    <property type="protein sequence ID" value="ENSBTAP00000016355.3"/>
    <property type="gene ID" value="ENSBTAG00000034069.5"/>
</dbReference>
<dbReference type="GeneID" id="540081"/>
<dbReference type="KEGG" id="bta:540081"/>
<dbReference type="CTD" id="4081"/>
<dbReference type="VEuPathDB" id="HostDB:ENSBTAG00000034069"/>
<dbReference type="VGNC" id="VGNC:31127">
    <property type="gene designation" value="MAB21L1"/>
</dbReference>
<dbReference type="eggNOG" id="KOG3963">
    <property type="taxonomic scope" value="Eukaryota"/>
</dbReference>
<dbReference type="GeneTree" id="ENSGT01050000244827"/>
<dbReference type="HOGENOM" id="CLU_045315_0_0_1"/>
<dbReference type="InParanoid" id="A4FV14"/>
<dbReference type="OMA" id="RESIYMK"/>
<dbReference type="OrthoDB" id="5961151at2759"/>
<dbReference type="TreeFam" id="TF315012"/>
<dbReference type="Proteomes" id="UP000009136">
    <property type="component" value="Chromosome 12"/>
</dbReference>
<dbReference type="Bgee" id="ENSBTAG00000034069">
    <property type="expression patterns" value="Expressed in retina and 63 other cell types or tissues"/>
</dbReference>
<dbReference type="GO" id="GO:0005634">
    <property type="term" value="C:nucleus"/>
    <property type="evidence" value="ECO:0007669"/>
    <property type="project" value="UniProtKB-SubCell"/>
</dbReference>
<dbReference type="GO" id="GO:0046872">
    <property type="term" value="F:metal ion binding"/>
    <property type="evidence" value="ECO:0007669"/>
    <property type="project" value="UniProtKB-KW"/>
</dbReference>
<dbReference type="GO" id="GO:0000166">
    <property type="term" value="F:nucleotide binding"/>
    <property type="evidence" value="ECO:0007669"/>
    <property type="project" value="UniProtKB-KW"/>
</dbReference>
<dbReference type="GO" id="GO:0016779">
    <property type="term" value="F:nucleotidyltransferase activity"/>
    <property type="evidence" value="ECO:0007669"/>
    <property type="project" value="UniProtKB-KW"/>
</dbReference>
<dbReference type="GO" id="GO:0001654">
    <property type="term" value="P:eye development"/>
    <property type="evidence" value="ECO:0000250"/>
    <property type="project" value="UniProtKB"/>
</dbReference>
<dbReference type="FunFam" id="1.10.1410.40:FF:000002">
    <property type="entry name" value="protein mab-21-like 1"/>
    <property type="match status" value="1"/>
</dbReference>
<dbReference type="FunFam" id="3.30.460.90:FF:000001">
    <property type="entry name" value="protein mab-21-like 2"/>
    <property type="match status" value="1"/>
</dbReference>
<dbReference type="Gene3D" id="1.10.1410.40">
    <property type="match status" value="1"/>
</dbReference>
<dbReference type="Gene3D" id="3.30.460.90">
    <property type="match status" value="1"/>
</dbReference>
<dbReference type="InterPro" id="IPR046903">
    <property type="entry name" value="Mab-21-like_nuc_Trfase"/>
</dbReference>
<dbReference type="InterPro" id="IPR046906">
    <property type="entry name" value="Mab-21_HhH/H2TH-like"/>
</dbReference>
<dbReference type="InterPro" id="IPR024810">
    <property type="entry name" value="MAB21L/cGLR"/>
</dbReference>
<dbReference type="PANTHER" id="PTHR10656">
    <property type="entry name" value="CELL FATE DETERMINING PROTEIN MAB21-RELATED"/>
    <property type="match status" value="1"/>
</dbReference>
<dbReference type="PANTHER" id="PTHR10656:SF38">
    <property type="entry name" value="NUCLEOTIDYLTRANSFERASE MAB21L1-RELATED"/>
    <property type="match status" value="1"/>
</dbReference>
<dbReference type="Pfam" id="PF03281">
    <property type="entry name" value="Mab-21"/>
    <property type="match status" value="1"/>
</dbReference>
<dbReference type="Pfam" id="PF20266">
    <property type="entry name" value="Mab-21_C"/>
    <property type="match status" value="1"/>
</dbReference>
<dbReference type="SMART" id="SM01265">
    <property type="entry name" value="Mab-21"/>
    <property type="match status" value="1"/>
</dbReference>
<gene>
    <name type="primary">MAB21L1</name>
</gene>
<keyword id="KW-0217">Developmental protein</keyword>
<keyword id="KW-0460">Magnesium</keyword>
<keyword id="KW-0479">Metal-binding</keyword>
<keyword id="KW-0547">Nucleotide-binding</keyword>
<keyword id="KW-0548">Nucleotidyltransferase</keyword>
<keyword id="KW-0539">Nucleus</keyword>
<keyword id="KW-1185">Reference proteome</keyword>
<keyword id="KW-0808">Transferase</keyword>
<sequence length="359" mass="40956">MIAAQAKLVYHLNKYYNEKCQARKAAIAKTIREVCKVVSDVLKEVEVQEPRFISSLNEMDNRYEGLEVISPTEFEVVLYLNQMGVFNFVDDGSLPGCAVLKLSDGRKRSMSLWVEFITASGYLSARKIRSRFQTLVAQAVDKCSYRDVVKMVADTSEVKLRIRDRYVVQITPAFKCTGIWPRSAAHWPLPHIPWPGPNRVAEVKAEGFNLLSKECHSLAGKQSSAESDAWVLQFAEAENRLQMGGCRKKCLSILKTLRDRHLELPGQPLNNYHMKTLVSYECEKHPRESDWDESCLGDRLNGILLQLISCLQCRRCPHYFLPNLDLFQGKPHSALENAAKQTWRLAREILTNPKSLEKL</sequence>